<reference key="1">
    <citation type="journal article" date="1988" name="J. Biol. Chem.">
        <title>Five distinct calcium and phospholipid binding proteins share homology with lipocortin I.</title>
        <authorList>
            <person name="Pepinsky R.B."/>
            <person name="Tizard R."/>
            <person name="Mattaliano R.J."/>
            <person name="Sinclair L.K."/>
            <person name="Miller G.T."/>
            <person name="Browning J.L."/>
            <person name="Chow E.P."/>
            <person name="Burne C."/>
            <person name="Huang K.-S."/>
            <person name="Pratt D."/>
            <person name="Wachter L."/>
            <person name="Hession C."/>
            <person name="Frey A.Z."/>
            <person name="Wallner B.P."/>
        </authorList>
    </citation>
    <scope>NUCLEOTIDE SEQUENCE [MRNA]</scope>
</reference>
<reference key="2">
    <citation type="journal article" date="1991" name="Genomics">
        <title>Chromosomal localization of the human annexin III (ANX3) gene.</title>
        <authorList>
            <person name="Tait J.F."/>
            <person name="Frankenberry D.A."/>
            <person name="Miao C.H."/>
            <person name="Killary A.M."/>
            <person name="Adler D.A."/>
            <person name="Disteche C.M."/>
        </authorList>
    </citation>
    <scope>NUCLEOTIDE SEQUENCE [MRNA]</scope>
</reference>
<reference key="3">
    <citation type="journal article" date="1993" name="Genomics">
        <title>Structure and polymorphisms of the human annexin III (ANX3) gene.</title>
        <authorList>
            <person name="Tait J.F."/>
            <person name="Smith C."/>
            <person name="Xu L."/>
            <person name="Cookson B.T."/>
        </authorList>
    </citation>
    <scope>NUCLEOTIDE SEQUENCE [GENOMIC DNA]</scope>
</reference>
<reference key="4">
    <citation type="submission" date="2004-05" db="EMBL/GenBank/DDBJ databases">
        <title>Cloning of human full open reading frames in Gateway(TM) system entry vector (pDONR201).</title>
        <authorList>
            <person name="Ebert L."/>
            <person name="Schick M."/>
            <person name="Neubert P."/>
            <person name="Schatten R."/>
            <person name="Henze S."/>
            <person name="Korn B."/>
        </authorList>
    </citation>
    <scope>NUCLEOTIDE SEQUENCE [LARGE SCALE MRNA]</scope>
</reference>
<reference key="5">
    <citation type="journal article" date="2004" name="Nat. Genet.">
        <title>Complete sequencing and characterization of 21,243 full-length human cDNAs.</title>
        <authorList>
            <person name="Ota T."/>
            <person name="Suzuki Y."/>
            <person name="Nishikawa T."/>
            <person name="Otsuki T."/>
            <person name="Sugiyama T."/>
            <person name="Irie R."/>
            <person name="Wakamatsu A."/>
            <person name="Hayashi K."/>
            <person name="Sato H."/>
            <person name="Nagai K."/>
            <person name="Kimura K."/>
            <person name="Makita H."/>
            <person name="Sekine M."/>
            <person name="Obayashi M."/>
            <person name="Nishi T."/>
            <person name="Shibahara T."/>
            <person name="Tanaka T."/>
            <person name="Ishii S."/>
            <person name="Yamamoto J."/>
            <person name="Saito K."/>
            <person name="Kawai Y."/>
            <person name="Isono Y."/>
            <person name="Nakamura Y."/>
            <person name="Nagahari K."/>
            <person name="Murakami K."/>
            <person name="Yasuda T."/>
            <person name="Iwayanagi T."/>
            <person name="Wagatsuma M."/>
            <person name="Shiratori A."/>
            <person name="Sudo H."/>
            <person name="Hosoiri T."/>
            <person name="Kaku Y."/>
            <person name="Kodaira H."/>
            <person name="Kondo H."/>
            <person name="Sugawara M."/>
            <person name="Takahashi M."/>
            <person name="Kanda K."/>
            <person name="Yokoi T."/>
            <person name="Furuya T."/>
            <person name="Kikkawa E."/>
            <person name="Omura Y."/>
            <person name="Abe K."/>
            <person name="Kamihara K."/>
            <person name="Katsuta N."/>
            <person name="Sato K."/>
            <person name="Tanikawa M."/>
            <person name="Yamazaki M."/>
            <person name="Ninomiya K."/>
            <person name="Ishibashi T."/>
            <person name="Yamashita H."/>
            <person name="Murakawa K."/>
            <person name="Fujimori K."/>
            <person name="Tanai H."/>
            <person name="Kimata M."/>
            <person name="Watanabe M."/>
            <person name="Hiraoka S."/>
            <person name="Chiba Y."/>
            <person name="Ishida S."/>
            <person name="Ono Y."/>
            <person name="Takiguchi S."/>
            <person name="Watanabe S."/>
            <person name="Yosida M."/>
            <person name="Hotuta T."/>
            <person name="Kusano J."/>
            <person name="Kanehori K."/>
            <person name="Takahashi-Fujii A."/>
            <person name="Hara H."/>
            <person name="Tanase T.-O."/>
            <person name="Nomura Y."/>
            <person name="Togiya S."/>
            <person name="Komai F."/>
            <person name="Hara R."/>
            <person name="Takeuchi K."/>
            <person name="Arita M."/>
            <person name="Imose N."/>
            <person name="Musashino K."/>
            <person name="Yuuki H."/>
            <person name="Oshima A."/>
            <person name="Sasaki N."/>
            <person name="Aotsuka S."/>
            <person name="Yoshikawa Y."/>
            <person name="Matsunawa H."/>
            <person name="Ichihara T."/>
            <person name="Shiohata N."/>
            <person name="Sano S."/>
            <person name="Moriya S."/>
            <person name="Momiyama H."/>
            <person name="Satoh N."/>
            <person name="Takami S."/>
            <person name="Terashima Y."/>
            <person name="Suzuki O."/>
            <person name="Nakagawa S."/>
            <person name="Senoh A."/>
            <person name="Mizoguchi H."/>
            <person name="Goto Y."/>
            <person name="Shimizu F."/>
            <person name="Wakebe H."/>
            <person name="Hishigaki H."/>
            <person name="Watanabe T."/>
            <person name="Sugiyama A."/>
            <person name="Takemoto M."/>
            <person name="Kawakami B."/>
            <person name="Yamazaki M."/>
            <person name="Watanabe K."/>
            <person name="Kumagai A."/>
            <person name="Itakura S."/>
            <person name="Fukuzumi Y."/>
            <person name="Fujimori Y."/>
            <person name="Komiyama M."/>
            <person name="Tashiro H."/>
            <person name="Tanigami A."/>
            <person name="Fujiwara T."/>
            <person name="Ono T."/>
            <person name="Yamada K."/>
            <person name="Fujii Y."/>
            <person name="Ozaki K."/>
            <person name="Hirao M."/>
            <person name="Ohmori Y."/>
            <person name="Kawabata A."/>
            <person name="Hikiji T."/>
            <person name="Kobatake N."/>
            <person name="Inagaki H."/>
            <person name="Ikema Y."/>
            <person name="Okamoto S."/>
            <person name="Okitani R."/>
            <person name="Kawakami T."/>
            <person name="Noguchi S."/>
            <person name="Itoh T."/>
            <person name="Shigeta K."/>
            <person name="Senba T."/>
            <person name="Matsumura K."/>
            <person name="Nakajima Y."/>
            <person name="Mizuno T."/>
            <person name="Morinaga M."/>
            <person name="Sasaki M."/>
            <person name="Togashi T."/>
            <person name="Oyama M."/>
            <person name="Hata H."/>
            <person name="Watanabe M."/>
            <person name="Komatsu T."/>
            <person name="Mizushima-Sugano J."/>
            <person name="Satoh T."/>
            <person name="Shirai Y."/>
            <person name="Takahashi Y."/>
            <person name="Nakagawa K."/>
            <person name="Okumura K."/>
            <person name="Nagase T."/>
            <person name="Nomura N."/>
            <person name="Kikuchi H."/>
            <person name="Masuho Y."/>
            <person name="Yamashita R."/>
            <person name="Nakai K."/>
            <person name="Yada T."/>
            <person name="Nakamura Y."/>
            <person name="Ohara O."/>
            <person name="Isogai T."/>
            <person name="Sugano S."/>
        </authorList>
    </citation>
    <scope>NUCLEOTIDE SEQUENCE [LARGE SCALE MRNA]</scope>
    <source>
        <tissue>Skeletal muscle</tissue>
    </source>
</reference>
<reference key="6">
    <citation type="submission" date="2005-07" db="EMBL/GenBank/DDBJ databases">
        <authorList>
            <person name="Mural R.J."/>
            <person name="Istrail S."/>
            <person name="Sutton G.G."/>
            <person name="Florea L."/>
            <person name="Halpern A.L."/>
            <person name="Mobarry C.M."/>
            <person name="Lippert R."/>
            <person name="Walenz B."/>
            <person name="Shatkay H."/>
            <person name="Dew I."/>
            <person name="Miller J.R."/>
            <person name="Flanigan M.J."/>
            <person name="Edwards N.J."/>
            <person name="Bolanos R."/>
            <person name="Fasulo D."/>
            <person name="Halldorsson B.V."/>
            <person name="Hannenhalli S."/>
            <person name="Turner R."/>
            <person name="Yooseph S."/>
            <person name="Lu F."/>
            <person name="Nusskern D.R."/>
            <person name="Shue B.C."/>
            <person name="Zheng X.H."/>
            <person name="Zhong F."/>
            <person name="Delcher A.L."/>
            <person name="Huson D.H."/>
            <person name="Kravitz S.A."/>
            <person name="Mouchard L."/>
            <person name="Reinert K."/>
            <person name="Remington K.A."/>
            <person name="Clark A.G."/>
            <person name="Waterman M.S."/>
            <person name="Eichler E.E."/>
            <person name="Adams M.D."/>
            <person name="Hunkapiller M.W."/>
            <person name="Myers E.W."/>
            <person name="Venter J.C."/>
        </authorList>
    </citation>
    <scope>NUCLEOTIDE SEQUENCE [LARGE SCALE GENOMIC DNA]</scope>
</reference>
<reference key="7">
    <citation type="journal article" date="2004" name="Genome Res.">
        <title>The status, quality, and expansion of the NIH full-length cDNA project: the Mammalian Gene Collection (MGC).</title>
        <authorList>
            <consortium name="The MGC Project Team"/>
        </authorList>
    </citation>
    <scope>NUCLEOTIDE SEQUENCE [LARGE SCALE MRNA]</scope>
    <source>
        <tissue>Cervix</tissue>
    </source>
</reference>
<reference key="8">
    <citation type="journal article" date="2003" name="Nat. Biotechnol.">
        <title>Exploring proteomes and analyzing protein processing by mass spectrometric identification of sorted N-terminal peptides.</title>
        <authorList>
            <person name="Gevaert K."/>
            <person name="Goethals M."/>
            <person name="Martens L."/>
            <person name="Van Damme J."/>
            <person name="Staes A."/>
            <person name="Thomas G.R."/>
            <person name="Vandekerckhove J."/>
        </authorList>
    </citation>
    <scope>PROTEIN SEQUENCE OF 2-8</scope>
    <source>
        <tissue>Platelet</tissue>
    </source>
</reference>
<reference key="9">
    <citation type="submission" date="2008-03" db="UniProtKB">
        <authorList>
            <person name="Bienvenut W.V."/>
            <person name="Heiserich L."/>
            <person name="Gottlieb E."/>
        </authorList>
    </citation>
    <scope>PROTEIN SEQUENCE OF 2-9; 40-48; 105-120; 155-163; 249-257; 264-274 AND 280-288</scope>
    <scope>CLEAVAGE OF INITIATOR METHIONINE</scope>
    <scope>ACETYLATION AT ALA-2</scope>
    <scope>IDENTIFICATION BY MASS SPECTROMETRY</scope>
    <source>
        <tissue>Colon carcinoma</tissue>
    </source>
</reference>
<reference key="10">
    <citation type="journal article" date="1990" name="Science">
        <title>Identity of inositol 1,2-cyclic phosphate 2-phosphohydrolase with lipocortin III.</title>
        <authorList>
            <person name="Ross T.S."/>
            <person name="Tait J.F."/>
            <person name="Majerus P.W."/>
        </authorList>
    </citation>
    <scope>PROTEIN SEQUENCE OF 41-102 AND 126-138</scope>
</reference>
<reference key="11">
    <citation type="journal article" date="1988" name="Biochemistry">
        <title>Placental anticoagulant proteins: isolation and comparative characterization four members of the lipocortin family.</title>
        <authorList>
            <person name="Tait J.F."/>
            <person name="Sakata M."/>
            <person name="McMullen B.A."/>
            <person name="Miao C.H."/>
            <person name="Funakoshi T."/>
            <person name="Hendrickson L.E."/>
            <person name="Fujikawa K."/>
        </authorList>
    </citation>
    <scope>PROTEIN SEQUENCE OF 41-79; 85-88; 104-119; 126-150 AND 217-323</scope>
</reference>
<reference key="12">
    <citation type="journal article" date="1990" name="J. Clin. Invest.">
        <title>Purification and characterization of an abundant cytosolic protein from human neutrophils that promotes Ca2(+)-dependent aggregation of isolated specific granules.</title>
        <authorList>
            <person name="Ernst J.D."/>
            <person name="Hoye E."/>
            <person name="Blackwood R.A."/>
            <person name="Jaye D."/>
        </authorList>
    </citation>
    <scope>PROTEIN SEQUENCE OF 42-55; 74-82; 105-126; 155-169; 177-209; 264-274 AND 305-315</scope>
    <scope>CALCIUM-DEPENDENT BINDING TO PHOSPHOLIPIDS</scope>
</reference>
<reference key="13">
    <citation type="journal article" date="2011" name="BMC Syst. Biol.">
        <title>Initial characterization of the human central proteome.</title>
        <authorList>
            <person name="Burkard T.R."/>
            <person name="Planyavsky M."/>
            <person name="Kaupe I."/>
            <person name="Breitwieser F.P."/>
            <person name="Buerckstuemmer T."/>
            <person name="Bennett K.L."/>
            <person name="Superti-Furga G."/>
            <person name="Colinge J."/>
        </authorList>
    </citation>
    <scope>IDENTIFICATION BY MASS SPECTROMETRY [LARGE SCALE ANALYSIS]</scope>
</reference>
<reference key="14">
    <citation type="journal article" date="1996" name="Biochemistry">
        <title>The high-resolution crystal structure of human annexin III shows subtle differences with annexin V.</title>
        <authorList>
            <person name="Favier-Perron B."/>
            <person name="Lewit-Bentley A."/>
            <person name="Russo-Marie F."/>
        </authorList>
    </citation>
    <scope>X-RAY CRYSTALLOGRAPHY (1.8 ANGSTROMS)</scope>
</reference>
<reference key="15">
    <citation type="journal article" date="1999" name="Nat. Genet.">
        <title>Characterization of single-nucleotide polymorphisms in coding regions of human genes.</title>
        <authorList>
            <person name="Cargill M."/>
            <person name="Altshuler D."/>
            <person name="Ireland J."/>
            <person name="Sklar P."/>
            <person name="Ardlie K."/>
            <person name="Patil N."/>
            <person name="Shaw N."/>
            <person name="Lane C.R."/>
            <person name="Lim E.P."/>
            <person name="Kalyanaraman N."/>
            <person name="Nemesh J."/>
            <person name="Ziaugra L."/>
            <person name="Friedland L."/>
            <person name="Rolfe A."/>
            <person name="Warrington J."/>
            <person name="Lipshutz R."/>
            <person name="Daley G.Q."/>
            <person name="Lander E.S."/>
        </authorList>
    </citation>
    <scope>VARIANTS ASN-19; ASN-219; LEU-251 AND SER-291</scope>
</reference>
<reference key="16">
    <citation type="journal article" date="1999" name="Nat. Genet.">
        <authorList>
            <person name="Cargill M."/>
            <person name="Altshuler D."/>
            <person name="Ireland J."/>
            <person name="Sklar P."/>
            <person name="Ardlie K."/>
            <person name="Patil N."/>
            <person name="Shaw N."/>
            <person name="Lane C.R."/>
            <person name="Lim E.P."/>
            <person name="Kalyanaraman N."/>
            <person name="Nemesh J."/>
            <person name="Ziaugra L."/>
            <person name="Friedland L."/>
            <person name="Rolfe A."/>
            <person name="Warrington J."/>
            <person name="Lipshutz R."/>
            <person name="Daley G.Q."/>
            <person name="Lander E.S."/>
        </authorList>
    </citation>
    <scope>ERRATUM OF PUBMED:10391209</scope>
</reference>
<sequence length="323" mass="36375">MASIWVGHRGTVRDYPDFSPSVDAEAIQKAIRGIGTDEKMLISILTERSNAQRQLIVKEYQAAYGKELKDDLKGDLSGHFEHLMVALVTPPAVFDAKQLKKSMKGAGTNEDALIEILTTRTSRQMKDISQAYYTVYKKSLGDDISSETSGDFRKALLTLADGRRDESLKVDEHLAKQDAQILYKAGENRWGTDEDKFTEILCLRSFPQLKLTFDEYRNISQKDIVDSIKGELSGHFEDLLLAIVNCVRNTPAFLAERLHRALKGIGTDEFTLNRIMVSRSEIDLLDIRTEFKKHYGYSLYSAIKSDTSGDYEITLLKICGGDD</sequence>
<comment type="function">
    <text>Inhibitor of phospholipase A2, also possesses anti-coagulant properties. Also cleaves the cyclic bond of inositol 1,2-cyclic phosphate to form inositol 1-phosphate.</text>
</comment>
<comment type="domain">
    <text>A pair of annexin repeats may form one binding site for calcium and phospholipid.</text>
</comment>
<comment type="similarity">
    <text evidence="2 6">Belongs to the annexin family.</text>
</comment>
<dbReference type="EMBL" id="M20560">
    <property type="protein sequence ID" value="AAA59496.1"/>
    <property type="molecule type" value="mRNA"/>
</dbReference>
<dbReference type="EMBL" id="M63310">
    <property type="protein sequence ID" value="AAA52284.1"/>
    <property type="molecule type" value="mRNA"/>
</dbReference>
<dbReference type="EMBL" id="L20591">
    <property type="protein sequence ID" value="AAA16713.1"/>
    <property type="molecule type" value="Genomic_DNA"/>
</dbReference>
<dbReference type="EMBL" id="CR407648">
    <property type="protein sequence ID" value="CAG28576.1"/>
    <property type="molecule type" value="mRNA"/>
</dbReference>
<dbReference type="EMBL" id="AK313945">
    <property type="protein sequence ID" value="BAG36663.1"/>
    <property type="molecule type" value="mRNA"/>
</dbReference>
<dbReference type="EMBL" id="CH471057">
    <property type="protein sequence ID" value="EAX05822.1"/>
    <property type="molecule type" value="Genomic_DNA"/>
</dbReference>
<dbReference type="EMBL" id="BC000871">
    <property type="protein sequence ID" value="AAH00871.1"/>
    <property type="molecule type" value="mRNA"/>
</dbReference>
<dbReference type="CCDS" id="CCDS3584.1"/>
<dbReference type="PIR" id="A47658">
    <property type="entry name" value="LUHU3"/>
</dbReference>
<dbReference type="RefSeq" id="NP_005130.1">
    <property type="nucleotide sequence ID" value="NM_005139.3"/>
</dbReference>
<dbReference type="PDB" id="1AII">
    <property type="method" value="X-ray"/>
    <property type="resolution" value="1.95 A"/>
    <property type="chains" value="A=1-323"/>
</dbReference>
<dbReference type="PDB" id="1AXN">
    <property type="method" value="X-ray"/>
    <property type="resolution" value="1.78 A"/>
    <property type="chains" value="A=2-323"/>
</dbReference>
<dbReference type="PDBsum" id="1AII"/>
<dbReference type="PDBsum" id="1AXN"/>
<dbReference type="SMR" id="P12429"/>
<dbReference type="BioGRID" id="106803">
    <property type="interactions" value="50"/>
</dbReference>
<dbReference type="FunCoup" id="P12429">
    <property type="interactions" value="289"/>
</dbReference>
<dbReference type="IntAct" id="P12429">
    <property type="interactions" value="21"/>
</dbReference>
<dbReference type="MINT" id="P12429"/>
<dbReference type="STRING" id="9606.ENSP00000264908"/>
<dbReference type="DrugBank" id="DB09095">
    <property type="generic name" value="Difluocortolone"/>
</dbReference>
<dbReference type="DrugBank" id="DB03994">
    <property type="generic name" value="Ethanolamine"/>
</dbReference>
<dbReference type="DrugBank" id="DB00591">
    <property type="generic name" value="Fluocinolone acetonide"/>
</dbReference>
<dbReference type="GlyGen" id="P12429">
    <property type="glycosylation" value="1 site, 1 O-linked glycan (1 site)"/>
</dbReference>
<dbReference type="iPTMnet" id="P12429"/>
<dbReference type="PhosphoSitePlus" id="P12429"/>
<dbReference type="SwissPalm" id="P12429"/>
<dbReference type="BioMuta" id="ANXA3"/>
<dbReference type="DMDM" id="113954"/>
<dbReference type="OGP" id="P12429"/>
<dbReference type="CPTAC" id="CPTAC-17"/>
<dbReference type="CPTAC" id="CPTAC-18"/>
<dbReference type="jPOST" id="P12429"/>
<dbReference type="MassIVE" id="P12429"/>
<dbReference type="PaxDb" id="9606-ENSP00000264908"/>
<dbReference type="PeptideAtlas" id="P12429"/>
<dbReference type="PRIDE" id="P12429"/>
<dbReference type="ProteomicsDB" id="52852"/>
<dbReference type="Antibodypedia" id="2890">
    <property type="antibodies" value="617 antibodies from 35 providers"/>
</dbReference>
<dbReference type="DNASU" id="306"/>
<dbReference type="Ensembl" id="ENST00000264908.11">
    <property type="protein sequence ID" value="ENSP00000264908.6"/>
    <property type="gene ID" value="ENSG00000138772.13"/>
</dbReference>
<dbReference type="GeneID" id="306"/>
<dbReference type="KEGG" id="hsa:306"/>
<dbReference type="MANE-Select" id="ENST00000264908.11">
    <property type="protein sequence ID" value="ENSP00000264908.6"/>
    <property type="RefSeq nucleotide sequence ID" value="NM_005139.3"/>
    <property type="RefSeq protein sequence ID" value="NP_005130.1"/>
</dbReference>
<dbReference type="UCSC" id="uc003hld.4">
    <property type="organism name" value="human"/>
</dbReference>
<dbReference type="AGR" id="HGNC:541"/>
<dbReference type="CTD" id="306"/>
<dbReference type="DisGeNET" id="306"/>
<dbReference type="GeneCards" id="ANXA3"/>
<dbReference type="HGNC" id="HGNC:541">
    <property type="gene designation" value="ANXA3"/>
</dbReference>
<dbReference type="HPA" id="ENSG00000138772">
    <property type="expression patterns" value="Tissue enhanced (bone)"/>
</dbReference>
<dbReference type="MIM" id="106490">
    <property type="type" value="gene"/>
</dbReference>
<dbReference type="neXtProt" id="NX_P12429"/>
<dbReference type="OpenTargets" id="ENSG00000138772"/>
<dbReference type="PharmGKB" id="PA24831"/>
<dbReference type="VEuPathDB" id="HostDB:ENSG00000138772"/>
<dbReference type="eggNOG" id="KOG0819">
    <property type="taxonomic scope" value="Eukaryota"/>
</dbReference>
<dbReference type="GeneTree" id="ENSGT00940000159174"/>
<dbReference type="HOGENOM" id="CLU_025300_0_0_1"/>
<dbReference type="InParanoid" id="P12429"/>
<dbReference type="OMA" id="DYNSRFM"/>
<dbReference type="OrthoDB" id="37886at2759"/>
<dbReference type="PAN-GO" id="P12429">
    <property type="GO annotations" value="2 GO annotations based on evolutionary models"/>
</dbReference>
<dbReference type="PhylomeDB" id="P12429"/>
<dbReference type="TreeFam" id="TF105452"/>
<dbReference type="PathwayCommons" id="P12429"/>
<dbReference type="SignaLink" id="P12429"/>
<dbReference type="SIGNOR" id="P12429"/>
<dbReference type="BioGRID-ORCS" id="306">
    <property type="hits" value="17 hits in 1157 CRISPR screens"/>
</dbReference>
<dbReference type="ChiTaRS" id="ANXA3">
    <property type="organism name" value="human"/>
</dbReference>
<dbReference type="EvolutionaryTrace" id="P12429"/>
<dbReference type="GeneWiki" id="Annexin_A3"/>
<dbReference type="GenomeRNAi" id="306"/>
<dbReference type="Pharos" id="P12429">
    <property type="development level" value="Tbio"/>
</dbReference>
<dbReference type="PRO" id="PR:P12429"/>
<dbReference type="Proteomes" id="UP000005640">
    <property type="component" value="Chromosome 4"/>
</dbReference>
<dbReference type="RNAct" id="P12429">
    <property type="molecule type" value="protein"/>
</dbReference>
<dbReference type="Bgee" id="ENSG00000138772">
    <property type="expression patterns" value="Expressed in right lung and 179 other cell types or tissues"/>
</dbReference>
<dbReference type="ExpressionAtlas" id="P12429">
    <property type="expression patterns" value="baseline and differential"/>
</dbReference>
<dbReference type="GO" id="GO:0005737">
    <property type="term" value="C:cytoplasm"/>
    <property type="evidence" value="ECO:0000314"/>
    <property type="project" value="UniProtKB"/>
</dbReference>
<dbReference type="GO" id="GO:0070062">
    <property type="term" value="C:extracellular exosome"/>
    <property type="evidence" value="ECO:0007005"/>
    <property type="project" value="UniProtKB"/>
</dbReference>
<dbReference type="GO" id="GO:0016020">
    <property type="term" value="C:membrane"/>
    <property type="evidence" value="ECO:0000314"/>
    <property type="project" value="UniProtKB"/>
</dbReference>
<dbReference type="GO" id="GO:0005634">
    <property type="term" value="C:nucleus"/>
    <property type="evidence" value="ECO:0000318"/>
    <property type="project" value="GO_Central"/>
</dbReference>
<dbReference type="GO" id="GO:0030670">
    <property type="term" value="C:phagocytic vesicle membrane"/>
    <property type="evidence" value="ECO:0000314"/>
    <property type="project" value="UniProtKB"/>
</dbReference>
<dbReference type="GO" id="GO:0005886">
    <property type="term" value="C:plasma membrane"/>
    <property type="evidence" value="ECO:0000314"/>
    <property type="project" value="UniProtKB"/>
</dbReference>
<dbReference type="GO" id="GO:0042581">
    <property type="term" value="C:specific granule"/>
    <property type="evidence" value="ECO:0000314"/>
    <property type="project" value="UniProtKB"/>
</dbReference>
<dbReference type="GO" id="GO:0012506">
    <property type="term" value="C:vesicle membrane"/>
    <property type="evidence" value="ECO:0000318"/>
    <property type="project" value="GO_Central"/>
</dbReference>
<dbReference type="GO" id="GO:0005509">
    <property type="term" value="F:calcium ion binding"/>
    <property type="evidence" value="ECO:0007669"/>
    <property type="project" value="InterPro"/>
</dbReference>
<dbReference type="GO" id="GO:0005544">
    <property type="term" value="F:calcium-dependent phospholipid binding"/>
    <property type="evidence" value="ECO:0000314"/>
    <property type="project" value="UniProtKB"/>
</dbReference>
<dbReference type="GO" id="GO:0048306">
    <property type="term" value="F:calcium-dependent protein binding"/>
    <property type="evidence" value="ECO:0000353"/>
    <property type="project" value="GO_Central"/>
</dbReference>
<dbReference type="GO" id="GO:0001786">
    <property type="term" value="F:phosphatidylserine binding"/>
    <property type="evidence" value="ECO:0000318"/>
    <property type="project" value="GO_Central"/>
</dbReference>
<dbReference type="GO" id="GO:0019834">
    <property type="term" value="F:phospholipase A2 inhibitor activity"/>
    <property type="evidence" value="ECO:0007669"/>
    <property type="project" value="UniProtKB-KW"/>
</dbReference>
<dbReference type="GO" id="GO:0042742">
    <property type="term" value="P:defense response to bacterium"/>
    <property type="evidence" value="ECO:0000314"/>
    <property type="project" value="UniProtKB"/>
</dbReference>
<dbReference type="GO" id="GO:0043312">
    <property type="term" value="P:neutrophil degranulation"/>
    <property type="evidence" value="ECO:0000314"/>
    <property type="project" value="UniProtKB"/>
</dbReference>
<dbReference type="GO" id="GO:0006909">
    <property type="term" value="P:phagocytosis"/>
    <property type="evidence" value="ECO:0000314"/>
    <property type="project" value="UniProtKB"/>
</dbReference>
<dbReference type="GO" id="GO:0045766">
    <property type="term" value="P:positive regulation of angiogenesis"/>
    <property type="evidence" value="ECO:0000314"/>
    <property type="project" value="UniProtKB"/>
</dbReference>
<dbReference type="GO" id="GO:0051091">
    <property type="term" value="P:positive regulation of DNA-binding transcription factor activity"/>
    <property type="evidence" value="ECO:0000314"/>
    <property type="project" value="UniProtKB"/>
</dbReference>
<dbReference type="GO" id="GO:0010595">
    <property type="term" value="P:positive regulation of endothelial cell migration"/>
    <property type="evidence" value="ECO:0000314"/>
    <property type="project" value="UniProtKB"/>
</dbReference>
<dbReference type="FunFam" id="1.10.220.10:FF:000002">
    <property type="entry name" value="Annexin"/>
    <property type="match status" value="1"/>
</dbReference>
<dbReference type="FunFam" id="1.10.220.10:FF:000003">
    <property type="entry name" value="Annexin"/>
    <property type="match status" value="1"/>
</dbReference>
<dbReference type="FunFam" id="1.10.220.10:FF:000004">
    <property type="entry name" value="Annexin"/>
    <property type="match status" value="1"/>
</dbReference>
<dbReference type="FunFam" id="1.10.220.10:FF:000022">
    <property type="entry name" value="Annexin A5"/>
    <property type="match status" value="1"/>
</dbReference>
<dbReference type="Gene3D" id="1.10.220.10">
    <property type="entry name" value="Annexin"/>
    <property type="match status" value="4"/>
</dbReference>
<dbReference type="InterPro" id="IPR001464">
    <property type="entry name" value="Annexin"/>
</dbReference>
<dbReference type="InterPro" id="IPR018502">
    <property type="entry name" value="Annexin_repeat"/>
</dbReference>
<dbReference type="InterPro" id="IPR018252">
    <property type="entry name" value="Annexin_repeat_CS"/>
</dbReference>
<dbReference type="InterPro" id="IPR037104">
    <property type="entry name" value="Annexin_sf"/>
</dbReference>
<dbReference type="InterPro" id="IPR002390">
    <property type="entry name" value="ANX3"/>
</dbReference>
<dbReference type="PANTHER" id="PTHR10502">
    <property type="entry name" value="ANNEXIN"/>
    <property type="match status" value="1"/>
</dbReference>
<dbReference type="PANTHER" id="PTHR10502:SF25">
    <property type="entry name" value="ANNEXIN A3"/>
    <property type="match status" value="1"/>
</dbReference>
<dbReference type="Pfam" id="PF00191">
    <property type="entry name" value="Annexin"/>
    <property type="match status" value="4"/>
</dbReference>
<dbReference type="PRINTS" id="PR00196">
    <property type="entry name" value="ANNEXIN"/>
</dbReference>
<dbReference type="PRINTS" id="PR00199">
    <property type="entry name" value="ANNEXINIII"/>
</dbReference>
<dbReference type="SMART" id="SM00335">
    <property type="entry name" value="ANX"/>
    <property type="match status" value="4"/>
</dbReference>
<dbReference type="SUPFAM" id="SSF47874">
    <property type="entry name" value="Annexin"/>
    <property type="match status" value="1"/>
</dbReference>
<dbReference type="PROSITE" id="PS00223">
    <property type="entry name" value="ANNEXIN_1"/>
    <property type="match status" value="4"/>
</dbReference>
<dbReference type="PROSITE" id="PS51897">
    <property type="entry name" value="ANNEXIN_2"/>
    <property type="match status" value="4"/>
</dbReference>
<accession>P12429</accession>
<accession>B2R9W6</accession>
<accession>Q6LET2</accession>
<proteinExistence type="evidence at protein level"/>
<feature type="initiator methionine" description="Removed" evidence="4 5">
    <location>
        <position position="1"/>
    </location>
</feature>
<feature type="chain" id="PRO_0000067477" description="Annexin A3">
    <location>
        <begin position="2"/>
        <end position="323"/>
    </location>
</feature>
<feature type="repeat" description="Annexin 1" evidence="2">
    <location>
        <begin position="18"/>
        <end position="89"/>
    </location>
</feature>
<feature type="repeat" description="Annexin 2" evidence="2">
    <location>
        <begin position="90"/>
        <end position="161"/>
    </location>
</feature>
<feature type="repeat" description="Annexin 3" evidence="2">
    <location>
        <begin position="173"/>
        <end position="245"/>
    </location>
</feature>
<feature type="repeat" description="Annexin 4" evidence="2">
    <location>
        <begin position="249"/>
        <end position="320"/>
    </location>
</feature>
<feature type="modified residue" description="N-acetylalanine" evidence="5">
    <location>
        <position position="2"/>
    </location>
</feature>
<feature type="modified residue" description="Phosphothreonine" evidence="1">
    <location>
        <position position="267"/>
    </location>
</feature>
<feature type="sequence variant" id="VAR_013914" description="In dbSNP:rs5951." evidence="3">
    <original>S</original>
    <variation>N</variation>
    <location>
        <position position="19"/>
    </location>
</feature>
<feature type="sequence variant" id="VAR_013915" description="In dbSNP:rs5948." evidence="3">
    <original>I</original>
    <variation>N</variation>
    <location>
        <position position="219"/>
    </location>
</feature>
<feature type="sequence variant" id="VAR_013916" description="In dbSNP:rs5949." evidence="3">
    <original>P</original>
    <variation>L</variation>
    <location>
        <position position="251"/>
    </location>
</feature>
<feature type="sequence variant" id="VAR_013917" description="In dbSNP:rs5941." evidence="3">
    <original>F</original>
    <variation>S</variation>
    <location>
        <position position="291"/>
    </location>
</feature>
<feature type="sequence conflict" description="In Ref. 4; CAG28576." evidence="6" ref="4">
    <original>G</original>
    <variation>R</variation>
    <location>
        <position position="35"/>
    </location>
</feature>
<feature type="sequence conflict" description="In Ref. 11; AA sequence." evidence="6" ref="11">
    <original>S</original>
    <variation>G</variation>
    <location>
        <position position="146"/>
    </location>
</feature>
<feature type="sequence conflict" description="In Ref. 11; AA sequence." evidence="6" ref="11">
    <original>H</original>
    <variation>R</variation>
    <location>
        <position position="294"/>
    </location>
</feature>
<feature type="helix" evidence="7">
    <location>
        <begin position="20"/>
        <end position="31"/>
    </location>
</feature>
<feature type="strand" evidence="7">
    <location>
        <begin position="32"/>
        <end position="35"/>
    </location>
</feature>
<feature type="helix" evidence="7">
    <location>
        <begin position="38"/>
        <end position="45"/>
    </location>
</feature>
<feature type="helix" evidence="7">
    <location>
        <begin position="50"/>
        <end position="64"/>
    </location>
</feature>
<feature type="helix" evidence="7">
    <location>
        <begin position="68"/>
        <end position="75"/>
    </location>
</feature>
<feature type="helix" evidence="7">
    <location>
        <begin position="78"/>
        <end position="88"/>
    </location>
</feature>
<feature type="helix" evidence="7">
    <location>
        <begin position="91"/>
        <end position="103"/>
    </location>
</feature>
<feature type="strand" evidence="7">
    <location>
        <begin position="105"/>
        <end position="107"/>
    </location>
</feature>
<feature type="helix" evidence="7">
    <location>
        <begin position="110"/>
        <end position="119"/>
    </location>
</feature>
<feature type="helix" evidence="7">
    <location>
        <begin position="122"/>
        <end position="136"/>
    </location>
</feature>
<feature type="helix" evidence="7">
    <location>
        <begin position="140"/>
        <end position="147"/>
    </location>
</feature>
<feature type="helix" evidence="7">
    <location>
        <begin position="150"/>
        <end position="160"/>
    </location>
</feature>
<feature type="helix" evidence="7">
    <location>
        <begin position="172"/>
        <end position="185"/>
    </location>
</feature>
<feature type="turn" evidence="7">
    <location>
        <begin position="186"/>
        <end position="188"/>
    </location>
</feature>
<feature type="strand" evidence="7">
    <location>
        <begin position="189"/>
        <end position="191"/>
    </location>
</feature>
<feature type="helix" evidence="7">
    <location>
        <begin position="194"/>
        <end position="203"/>
    </location>
</feature>
<feature type="helix" evidence="7">
    <location>
        <begin position="206"/>
        <end position="220"/>
    </location>
</feature>
<feature type="helix" evidence="7">
    <location>
        <begin position="224"/>
        <end position="231"/>
    </location>
</feature>
<feature type="helix" evidence="7">
    <location>
        <begin position="234"/>
        <end position="262"/>
    </location>
</feature>
<feature type="strand" evidence="7">
    <location>
        <begin position="263"/>
        <end position="266"/>
    </location>
</feature>
<feature type="helix" evidence="7">
    <location>
        <begin position="269"/>
        <end position="279"/>
    </location>
</feature>
<feature type="turn" evidence="7">
    <location>
        <begin position="280"/>
        <end position="283"/>
    </location>
</feature>
<feature type="helix" evidence="7">
    <location>
        <begin position="284"/>
        <end position="295"/>
    </location>
</feature>
<feature type="helix" evidence="7">
    <location>
        <begin position="299"/>
        <end position="306"/>
    </location>
</feature>
<feature type="helix" evidence="7">
    <location>
        <begin position="309"/>
        <end position="319"/>
    </location>
</feature>
<organism>
    <name type="scientific">Homo sapiens</name>
    <name type="common">Human</name>
    <dbReference type="NCBI Taxonomy" id="9606"/>
    <lineage>
        <taxon>Eukaryota</taxon>
        <taxon>Metazoa</taxon>
        <taxon>Chordata</taxon>
        <taxon>Craniata</taxon>
        <taxon>Vertebrata</taxon>
        <taxon>Euteleostomi</taxon>
        <taxon>Mammalia</taxon>
        <taxon>Eutheria</taxon>
        <taxon>Euarchontoglires</taxon>
        <taxon>Primates</taxon>
        <taxon>Haplorrhini</taxon>
        <taxon>Catarrhini</taxon>
        <taxon>Hominidae</taxon>
        <taxon>Homo</taxon>
    </lineage>
</organism>
<gene>
    <name type="primary">ANXA3</name>
    <name type="synonym">ANX3</name>
</gene>
<name>ANXA3_HUMAN</name>
<keyword id="KW-0002">3D-structure</keyword>
<keyword id="KW-0007">Acetylation</keyword>
<keyword id="KW-0041">Annexin</keyword>
<keyword id="KW-0106">Calcium</keyword>
<keyword id="KW-0111">Calcium/phospholipid-binding</keyword>
<keyword id="KW-0903">Direct protein sequencing</keyword>
<keyword id="KW-0593">Phospholipase A2 inhibitor</keyword>
<keyword id="KW-0597">Phosphoprotein</keyword>
<keyword id="KW-1267">Proteomics identification</keyword>
<keyword id="KW-1185">Reference proteome</keyword>
<keyword id="KW-0677">Repeat</keyword>
<protein>
    <recommendedName>
        <fullName>Annexin A3</fullName>
    </recommendedName>
    <alternativeName>
        <fullName>35-alpha calcimedin</fullName>
    </alternativeName>
    <alternativeName>
        <fullName>Annexin III</fullName>
    </alternativeName>
    <alternativeName>
        <fullName>Annexin-3</fullName>
    </alternativeName>
    <alternativeName>
        <fullName>Inositol 1,2-cyclic phosphate 2-phosphohydrolase</fullName>
    </alternativeName>
    <alternativeName>
        <fullName>Lipocortin III</fullName>
    </alternativeName>
    <alternativeName>
        <fullName>Placental anticoagulant protein III</fullName>
        <shortName>PAP-III</shortName>
    </alternativeName>
</protein>
<evidence type="ECO:0000250" key="1">
    <source>
        <dbReference type="UniProtKB" id="P14669"/>
    </source>
</evidence>
<evidence type="ECO:0000255" key="2">
    <source>
        <dbReference type="PROSITE-ProRule" id="PRU01245"/>
    </source>
</evidence>
<evidence type="ECO:0000269" key="3">
    <source>
    </source>
</evidence>
<evidence type="ECO:0000269" key="4">
    <source>
    </source>
</evidence>
<evidence type="ECO:0000269" key="5">
    <source ref="9"/>
</evidence>
<evidence type="ECO:0000305" key="6"/>
<evidence type="ECO:0007829" key="7">
    <source>
        <dbReference type="PDB" id="1AXN"/>
    </source>
</evidence>